<organism>
    <name type="scientific">Macaca mulatta</name>
    <name type="common">Rhesus macaque</name>
    <dbReference type="NCBI Taxonomy" id="9544"/>
    <lineage>
        <taxon>Eukaryota</taxon>
        <taxon>Metazoa</taxon>
        <taxon>Chordata</taxon>
        <taxon>Craniata</taxon>
        <taxon>Vertebrata</taxon>
        <taxon>Euteleostomi</taxon>
        <taxon>Mammalia</taxon>
        <taxon>Eutheria</taxon>
        <taxon>Euarchontoglires</taxon>
        <taxon>Primates</taxon>
        <taxon>Haplorrhini</taxon>
        <taxon>Catarrhini</taxon>
        <taxon>Cercopithecidae</taxon>
        <taxon>Cercopithecinae</taxon>
        <taxon>Macaca</taxon>
    </lineage>
</organism>
<sequence length="398" mass="44266">MAQRQPHSPNQTLISITNDTESSSVVSNDNTNKGRSGDNSPGIEALCAIYITYAVIISVGILGNAILIKVFFKTKSMQTVPNIFITSLAFGDLLLLLTCVPVDATHYLAEGWLFGRIGCKVLSFIRLTSVGVSVFTLTILSADRYKAVVKPLERQPSNAILKTCIKAGCVWIVSMIFALPEAIFSNVYSFRDPNKNVTFESCTSYPVSKKLLQEIHSLLCFLVFYIIPLSIISVYYSLIARTLYKSTLNIPTEEQGHARKQIESRKRIARTVLVLVALFALCWLPNHLLYLYHSFTSQTYVDPSAMHFIFTIFSRVLAFSNSCVNPFALYWLSKTFQKHFKAQLFCCKAEQPEPPVADTSLTTLAVMGRVPGTGNMQMSEISVTSFPGCSVKQAEDRV</sequence>
<reference key="1">
    <citation type="journal article" date="2004" name="Genomics">
        <title>Characterization of the bombesin-like peptide receptor family in primates.</title>
        <authorList>
            <person name="Sano H."/>
            <person name="Feighner S.D."/>
            <person name="Hreniuk D.L."/>
            <person name="Iwaasa H."/>
            <person name="Sailer A.W."/>
            <person name="Pan J."/>
            <person name="Reitman M.L."/>
            <person name="Kanatani A."/>
            <person name="Howard A.D."/>
            <person name="Tan C.P."/>
        </authorList>
    </citation>
    <scope>NUCLEOTIDE SEQUENCE [MRNA]</scope>
</reference>
<comment type="function">
    <text>Role in sperm cell division, maturation, or function. This receptor mediates its action by association with G proteins that activate a phosphatidylinositol-calcium second messenger system.</text>
</comment>
<comment type="subunit">
    <text evidence="1">Interacts with C6orf89.</text>
</comment>
<comment type="subcellular location">
    <subcellularLocation>
        <location>Cell membrane</location>
        <topology>Multi-pass membrane protein</topology>
    </subcellularLocation>
</comment>
<comment type="similarity">
    <text evidence="3">Belongs to the G-protein coupled receptor 1 family.</text>
</comment>
<dbReference type="EMBL" id="AY350447">
    <property type="protein sequence ID" value="AAR07972.1"/>
    <property type="molecule type" value="mRNA"/>
</dbReference>
<dbReference type="RefSeq" id="NP_001028074.1">
    <property type="nucleotide sequence ID" value="NM_001032902.1"/>
</dbReference>
<dbReference type="SMR" id="Q6H2Y3"/>
<dbReference type="FunCoup" id="Q6H2Y3">
    <property type="interactions" value="436"/>
</dbReference>
<dbReference type="STRING" id="9544.ENSMMUP00000077818"/>
<dbReference type="GlyCosmos" id="Q6H2Y3">
    <property type="glycosylation" value="2 sites, No reported glycans"/>
</dbReference>
<dbReference type="PaxDb" id="9544-ENSMMUP00000008499"/>
<dbReference type="Ensembl" id="ENSMMUT00000093189.1">
    <property type="protein sequence ID" value="ENSMMUP00000077818.1"/>
    <property type="gene ID" value="ENSMMUG00000052892.1"/>
</dbReference>
<dbReference type="GeneID" id="574261"/>
<dbReference type="KEGG" id="mcc:574261"/>
<dbReference type="CTD" id="680"/>
<dbReference type="VEuPathDB" id="HostDB:ENSMMUG00000052892"/>
<dbReference type="eggNOG" id="KOG3656">
    <property type="taxonomic scope" value="Eukaryota"/>
</dbReference>
<dbReference type="GeneTree" id="ENSGT01120000271837"/>
<dbReference type="HOGENOM" id="CLU_009579_6_2_1"/>
<dbReference type="InParanoid" id="Q6H2Y3"/>
<dbReference type="OMA" id="GTGNIQM"/>
<dbReference type="OrthoDB" id="10049706at2759"/>
<dbReference type="TreeFam" id="TF331292"/>
<dbReference type="Proteomes" id="UP000006718">
    <property type="component" value="Chromosome X"/>
</dbReference>
<dbReference type="GO" id="GO:0005886">
    <property type="term" value="C:plasma membrane"/>
    <property type="evidence" value="ECO:0000318"/>
    <property type="project" value="GO_Central"/>
</dbReference>
<dbReference type="GO" id="GO:0004946">
    <property type="term" value="F:bombesin receptor activity"/>
    <property type="evidence" value="ECO:0007669"/>
    <property type="project" value="InterPro"/>
</dbReference>
<dbReference type="GO" id="GO:0008188">
    <property type="term" value="F:neuropeptide receptor activity"/>
    <property type="evidence" value="ECO:0000318"/>
    <property type="project" value="GO_Central"/>
</dbReference>
<dbReference type="GO" id="GO:0007186">
    <property type="term" value="P:G protein-coupled receptor signaling pathway"/>
    <property type="evidence" value="ECO:0000318"/>
    <property type="project" value="GO_Central"/>
</dbReference>
<dbReference type="CDD" id="cd15123">
    <property type="entry name" value="7tmA_BRS-3"/>
    <property type="match status" value="1"/>
</dbReference>
<dbReference type="FunFam" id="1.20.1070.10:FF:000166">
    <property type="entry name" value="Bombesin receptor subtype-3"/>
    <property type="match status" value="1"/>
</dbReference>
<dbReference type="Gene3D" id="1.20.1070.10">
    <property type="entry name" value="Rhodopsin 7-helix transmembrane proteins"/>
    <property type="match status" value="1"/>
</dbReference>
<dbReference type="InterPro" id="IPR001560">
    <property type="entry name" value="Bombesin_rcpt_3"/>
</dbReference>
<dbReference type="InterPro" id="IPR001556">
    <property type="entry name" value="Bombsn_rcpt-like"/>
</dbReference>
<dbReference type="InterPro" id="IPR000276">
    <property type="entry name" value="GPCR_Rhodpsn"/>
</dbReference>
<dbReference type="InterPro" id="IPR017452">
    <property type="entry name" value="GPCR_Rhodpsn_7TM"/>
</dbReference>
<dbReference type="PANTHER" id="PTHR45695:SF6">
    <property type="entry name" value="BOMBESIN RECEPTOR SUBTYPE-3"/>
    <property type="match status" value="1"/>
</dbReference>
<dbReference type="PANTHER" id="PTHR45695">
    <property type="entry name" value="LEUCOKININ RECEPTOR-RELATED"/>
    <property type="match status" value="1"/>
</dbReference>
<dbReference type="Pfam" id="PF00001">
    <property type="entry name" value="7tm_1"/>
    <property type="match status" value="1"/>
</dbReference>
<dbReference type="PRINTS" id="PR00637">
    <property type="entry name" value="BOMBESIN3R"/>
</dbReference>
<dbReference type="PRINTS" id="PR00358">
    <property type="entry name" value="BOMBESINR"/>
</dbReference>
<dbReference type="PRINTS" id="PR00237">
    <property type="entry name" value="GPCRRHODOPSN"/>
</dbReference>
<dbReference type="SMART" id="SM01381">
    <property type="entry name" value="7TM_GPCR_Srsx"/>
    <property type="match status" value="1"/>
</dbReference>
<dbReference type="SUPFAM" id="SSF81321">
    <property type="entry name" value="Family A G protein-coupled receptor-like"/>
    <property type="match status" value="1"/>
</dbReference>
<dbReference type="PROSITE" id="PS00237">
    <property type="entry name" value="G_PROTEIN_RECEP_F1_1"/>
    <property type="match status" value="1"/>
</dbReference>
<dbReference type="PROSITE" id="PS50262">
    <property type="entry name" value="G_PROTEIN_RECEP_F1_2"/>
    <property type="match status" value="1"/>
</dbReference>
<evidence type="ECO:0000250" key="1"/>
<evidence type="ECO:0000255" key="2"/>
<evidence type="ECO:0000255" key="3">
    <source>
        <dbReference type="PROSITE-ProRule" id="PRU00521"/>
    </source>
</evidence>
<keyword id="KW-1003">Cell membrane</keyword>
<keyword id="KW-1015">Disulfide bond</keyword>
<keyword id="KW-0297">G-protein coupled receptor</keyword>
<keyword id="KW-0325">Glycoprotein</keyword>
<keyword id="KW-0449">Lipoprotein</keyword>
<keyword id="KW-0472">Membrane</keyword>
<keyword id="KW-0564">Palmitate</keyword>
<keyword id="KW-0675">Receptor</keyword>
<keyword id="KW-1185">Reference proteome</keyword>
<keyword id="KW-0807">Transducer</keyword>
<keyword id="KW-0812">Transmembrane</keyword>
<keyword id="KW-1133">Transmembrane helix</keyword>
<feature type="chain" id="PRO_0000069197" description="Bombesin receptor subtype-3">
    <location>
        <begin position="1"/>
        <end position="398"/>
    </location>
</feature>
<feature type="topological domain" description="Extracellular" evidence="2">
    <location>
        <begin position="1"/>
        <end position="40"/>
    </location>
</feature>
<feature type="transmembrane region" description="Helical; Name=1" evidence="2">
    <location>
        <begin position="41"/>
        <end position="62"/>
    </location>
</feature>
<feature type="topological domain" description="Cytoplasmic" evidence="2">
    <location>
        <begin position="63"/>
        <end position="81"/>
    </location>
</feature>
<feature type="transmembrane region" description="Helical; Name=2" evidence="2">
    <location>
        <begin position="82"/>
        <end position="102"/>
    </location>
</feature>
<feature type="topological domain" description="Extracellular" evidence="2">
    <location>
        <begin position="103"/>
        <end position="120"/>
    </location>
</feature>
<feature type="transmembrane region" description="Helical; Name=3" evidence="2">
    <location>
        <begin position="121"/>
        <end position="142"/>
    </location>
</feature>
<feature type="topological domain" description="Cytoplasmic" evidence="2">
    <location>
        <begin position="143"/>
        <end position="162"/>
    </location>
</feature>
<feature type="transmembrane region" description="Helical; Name=4" evidence="2">
    <location>
        <begin position="163"/>
        <end position="183"/>
    </location>
</feature>
<feature type="topological domain" description="Extracellular" evidence="2">
    <location>
        <begin position="184"/>
        <end position="219"/>
    </location>
</feature>
<feature type="transmembrane region" description="Helical; Name=5" evidence="2">
    <location>
        <begin position="220"/>
        <end position="240"/>
    </location>
</feature>
<feature type="topological domain" description="Cytoplasmic" evidence="2">
    <location>
        <begin position="241"/>
        <end position="271"/>
    </location>
</feature>
<feature type="transmembrane region" description="Helical; Name=6" evidence="2">
    <location>
        <begin position="272"/>
        <end position="292"/>
    </location>
</feature>
<feature type="topological domain" description="Extracellular" evidence="2">
    <location>
        <begin position="293"/>
        <end position="312"/>
    </location>
</feature>
<feature type="transmembrane region" description="Helical; Name=7" evidence="2">
    <location>
        <begin position="313"/>
        <end position="332"/>
    </location>
</feature>
<feature type="topological domain" description="Cytoplasmic" evidence="2">
    <location>
        <begin position="333"/>
        <end position="398"/>
    </location>
</feature>
<feature type="lipid moiety-binding region" description="S-palmitoyl cysteine" evidence="1">
    <location>
        <position position="346"/>
    </location>
</feature>
<feature type="glycosylation site" description="N-linked (GlcNAc...) asparagine" evidence="2">
    <location>
        <position position="10"/>
    </location>
</feature>
<feature type="glycosylation site" description="N-linked (GlcNAc...) asparagine" evidence="2">
    <location>
        <position position="18"/>
    </location>
</feature>
<feature type="disulfide bond" evidence="3">
    <location>
        <begin position="119"/>
        <end position="202"/>
    </location>
</feature>
<name>BRS3_MACMU</name>
<accession>Q6H2Y3</accession>
<proteinExistence type="evidence at transcript level"/>
<protein>
    <recommendedName>
        <fullName>Bombesin receptor subtype-3</fullName>
        <shortName>BRS-3</shortName>
    </recommendedName>
</protein>
<gene>
    <name type="primary">BRS3</name>
</gene>